<organism>
    <name type="scientific">Parasynechococcus marenigrum (strain WH8102)</name>
    <dbReference type="NCBI Taxonomy" id="84588"/>
    <lineage>
        <taxon>Bacteria</taxon>
        <taxon>Bacillati</taxon>
        <taxon>Cyanobacteriota</taxon>
        <taxon>Cyanophyceae</taxon>
        <taxon>Synechococcales</taxon>
        <taxon>Prochlorococcaceae</taxon>
        <taxon>Parasynechococcus</taxon>
        <taxon>Parasynechococcus marenigrum</taxon>
    </lineage>
</organism>
<comment type="function">
    <text>Light-harvesting photosynthetic bile pigment-protein from the phycobiliprotein complex.</text>
</comment>
<comment type="subunit">
    <text evidence="1">Heterodimer of an alpha and a beta chain.</text>
</comment>
<comment type="subcellular location">
    <subcellularLocation>
        <location evidence="1">Cellular thylakoid membrane</location>
        <topology evidence="1">Peripheral membrane protein</topology>
        <orientation evidence="1">Cytoplasmic side</orientation>
    </subcellularLocation>
    <text evidence="1">Forms the periphery of the phycobilisome rod.</text>
</comment>
<comment type="PTM">
    <text evidence="1">Contains two covalently linked phycoerythrobilin chromophores and one covalently linked phycourobilin chromophore.</text>
</comment>
<comment type="similarity">
    <text evidence="2">Belongs to the phycobiliprotein family.</text>
</comment>
<gene>
    <name type="primary">mpeB</name>
    <name type="ordered locus">SYNW2008</name>
</gene>
<evidence type="ECO:0000250" key="1"/>
<evidence type="ECO:0000305" key="2"/>
<proteinExistence type="inferred from homology"/>
<dbReference type="EMBL" id="BX569694">
    <property type="protein sequence ID" value="CAE08523.1"/>
    <property type="molecule type" value="Genomic_DNA"/>
</dbReference>
<dbReference type="RefSeq" id="WP_011128866.1">
    <property type="nucleotide sequence ID" value="NC_005070.1"/>
</dbReference>
<dbReference type="SMR" id="P0A318"/>
<dbReference type="STRING" id="84588.SYNW2008"/>
<dbReference type="KEGG" id="syw:SYNW2008"/>
<dbReference type="eggNOG" id="ENOG5031YMC">
    <property type="taxonomic scope" value="Bacteria"/>
</dbReference>
<dbReference type="HOGENOM" id="CLU_104219_0_0_3"/>
<dbReference type="Proteomes" id="UP000001422">
    <property type="component" value="Chromosome"/>
</dbReference>
<dbReference type="GO" id="GO:0030089">
    <property type="term" value="C:phycobilisome"/>
    <property type="evidence" value="ECO:0007669"/>
    <property type="project" value="UniProtKB-KW"/>
</dbReference>
<dbReference type="GO" id="GO:0031676">
    <property type="term" value="C:plasma membrane-derived thylakoid membrane"/>
    <property type="evidence" value="ECO:0007669"/>
    <property type="project" value="UniProtKB-SubCell"/>
</dbReference>
<dbReference type="GO" id="GO:0015979">
    <property type="term" value="P:photosynthesis"/>
    <property type="evidence" value="ECO:0007669"/>
    <property type="project" value="UniProtKB-KW"/>
</dbReference>
<dbReference type="Gene3D" id="1.10.490.20">
    <property type="entry name" value="Phycocyanins"/>
    <property type="match status" value="1"/>
</dbReference>
<dbReference type="InterPro" id="IPR009050">
    <property type="entry name" value="Globin-like_sf"/>
</dbReference>
<dbReference type="InterPro" id="IPR012128">
    <property type="entry name" value="Phycobilisome_asu/bsu"/>
</dbReference>
<dbReference type="InterPro" id="IPR038719">
    <property type="entry name" value="Phycobilisome_asu/bsu_sf"/>
</dbReference>
<dbReference type="PANTHER" id="PTHR34011:SF7">
    <property type="entry name" value="C-PHYCOCYANIN BETA SUBUNIT"/>
    <property type="match status" value="1"/>
</dbReference>
<dbReference type="PANTHER" id="PTHR34011">
    <property type="entry name" value="PHYCOBILISOME 32.1 KDA LINKER POLYPEPTIDE, PHYCOCYANIN-ASSOCIATED, ROD 2-RELATED"/>
    <property type="match status" value="1"/>
</dbReference>
<dbReference type="Pfam" id="PF00502">
    <property type="entry name" value="Phycobilisome"/>
    <property type="match status" value="1"/>
</dbReference>
<dbReference type="PIRSF" id="PIRSF000081">
    <property type="entry name" value="Phycocyanin"/>
    <property type="match status" value="1"/>
</dbReference>
<dbReference type="SUPFAM" id="SSF46458">
    <property type="entry name" value="Globin-like"/>
    <property type="match status" value="1"/>
</dbReference>
<sequence>MLDAFSRAAVSADSSGSFIGGGELASLKSFIADGNKRLDAVNAITSNASCIVSDAVAGICCENTGLTAPNGGVYTNRKMAACLRDGEIVLRYVSYALLAGDASVLQDRCLNGLRETYAALGVPTGSASRAVAIMKAAAGALITNTNSQPKKMPVTTGDCSNIAGEAASYFDMVISAIS</sequence>
<keyword id="KW-0042">Antenna complex</keyword>
<keyword id="KW-0089">Bile pigment</keyword>
<keyword id="KW-0157">Chromophore</keyword>
<keyword id="KW-0249">Electron transport</keyword>
<keyword id="KW-0472">Membrane</keyword>
<keyword id="KW-0602">Photosynthesis</keyword>
<keyword id="KW-0605">Phycobilisome</keyword>
<keyword id="KW-0793">Thylakoid</keyword>
<keyword id="KW-0813">Transport</keyword>
<name>PHEB2_PARMW</name>
<accession>P0A318</accession>
<accession>P37721</accession>
<feature type="chain" id="PRO_0000199205" description="C-phycoerythrin class 2 subunit beta">
    <location>
        <begin position="1"/>
        <end position="178"/>
    </location>
</feature>
<feature type="binding site" description="covalent" evidence="1">
    <location>
        <position position="50"/>
    </location>
    <ligand>
        <name>phycourobilin</name>
        <dbReference type="ChEBI" id="CHEBI:189062"/>
    </ligand>
</feature>
<feature type="binding site" description="covalent" evidence="1">
    <location>
        <position position="61"/>
    </location>
    <ligand>
        <name>phycourobilin</name>
        <dbReference type="ChEBI" id="CHEBI:189062"/>
    </ligand>
</feature>
<feature type="binding site" description="covalent" evidence="1">
    <location>
        <position position="82"/>
    </location>
    <ligand>
        <name>(2R,3E)-phycoerythrobilin</name>
        <dbReference type="ChEBI" id="CHEBI:85276"/>
        <label>1</label>
    </ligand>
</feature>
<feature type="binding site" description="covalent" evidence="1">
    <location>
        <position position="159"/>
    </location>
    <ligand>
        <name>(2R,3E)-phycoerythrobilin</name>
        <dbReference type="ChEBI" id="CHEBI:85276"/>
        <label>2</label>
    </ligand>
</feature>
<reference key="1">
    <citation type="journal article" date="2003" name="Nature">
        <title>The genome of a motile marine Synechococcus.</title>
        <authorList>
            <person name="Palenik B."/>
            <person name="Brahamsha B."/>
            <person name="Larimer F.W."/>
            <person name="Land M.L."/>
            <person name="Hauser L."/>
            <person name="Chain P."/>
            <person name="Lamerdin J.E."/>
            <person name="Regala W."/>
            <person name="Allen E.E."/>
            <person name="McCarren J."/>
            <person name="Paulsen I.T."/>
            <person name="Dufresne A."/>
            <person name="Partensky F."/>
            <person name="Webb E.A."/>
            <person name="Waterbury J."/>
        </authorList>
    </citation>
    <scope>NUCLEOTIDE SEQUENCE [LARGE SCALE GENOMIC DNA]</scope>
    <source>
        <strain>WH8102</strain>
    </source>
</reference>
<protein>
    <recommendedName>
        <fullName>C-phycoerythrin class 2 subunit beta</fullName>
    </recommendedName>
    <alternativeName>
        <fullName>C-phycoerythrin class II beta chain</fullName>
    </alternativeName>
</protein>